<reference key="1">
    <citation type="journal article" date="1990" name="Mol. Microbiol.">
        <title>Nucleotide sequence and control of transcription of the bacteriophage T4 motA regulatory gene.</title>
        <authorList>
            <person name="Uzan M."/>
            <person name="Brody E."/>
            <person name="Favre R."/>
        </authorList>
    </citation>
    <scope>NUCLEOTIDE SEQUENCE [GENOMIC DNA]</scope>
</reference>
<reference key="2">
    <citation type="journal article" date="2003" name="Microbiol. Mol. Biol. Rev.">
        <title>Bacteriophage T4 genome.</title>
        <authorList>
            <person name="Miller E.S."/>
            <person name="Kutter E."/>
            <person name="Mosig G."/>
            <person name="Arisaka F."/>
            <person name="Kunisawa T."/>
            <person name="Ruger W."/>
        </authorList>
    </citation>
    <scope>NUCLEOTIDE SEQUENCE [LARGE SCALE GENOMIC DNA]</scope>
</reference>
<dbReference type="EMBL" id="Z48569">
    <property type="protein sequence ID" value="CAA88454.1"/>
    <property type="molecule type" value="Genomic_DNA"/>
</dbReference>
<dbReference type="EMBL" id="AF158101">
    <property type="protein sequence ID" value="AAD42544.3"/>
    <property type="status" value="ALT_INIT"/>
    <property type="molecule type" value="Genomic_DNA"/>
</dbReference>
<dbReference type="PIR" id="JV0102">
    <property type="entry name" value="JV0102"/>
</dbReference>
<dbReference type="RefSeq" id="NP_049872.2">
    <property type="nucleotide sequence ID" value="NC_000866.4"/>
</dbReference>
<dbReference type="GeneID" id="1258699"/>
<dbReference type="KEGG" id="vg:1258699"/>
<dbReference type="OrthoDB" id="15277at10239"/>
<dbReference type="Proteomes" id="UP000009087">
    <property type="component" value="Segment"/>
</dbReference>
<keyword id="KW-1185">Reference proteome</keyword>
<organism>
    <name type="scientific">Enterobacteria phage T4</name>
    <name type="common">Bacteriophage T4</name>
    <dbReference type="NCBI Taxonomy" id="10665"/>
    <lineage>
        <taxon>Viruses</taxon>
        <taxon>Duplodnaviria</taxon>
        <taxon>Heunggongvirae</taxon>
        <taxon>Uroviricota</taxon>
        <taxon>Caudoviricetes</taxon>
        <taxon>Straboviridae</taxon>
        <taxon>Tevenvirinae</taxon>
        <taxon>Tequatrovirus</taxon>
    </lineage>
</organism>
<gene>
    <name type="primary">y16F</name>
    <name type="synonym">arn.4</name>
    <name type="synonym">asiA.6</name>
    <name type="synonym">motA.-1</name>
</gene>
<feature type="chain" id="PRO_0000165204" description="Uncharacterized 12.8 kDa protein in arn-motA intergenic region">
    <location>
        <begin position="1"/>
        <end position="110"/>
    </location>
</feature>
<name>Y16F_BPT4</name>
<organismHost>
    <name type="scientific">Escherichia coli</name>
    <dbReference type="NCBI Taxonomy" id="562"/>
</organismHost>
<proteinExistence type="predicted"/>
<evidence type="ECO:0000305" key="1"/>
<comment type="sequence caution" evidence="1">
    <conflict type="erroneous initiation">
        <sequence resource="EMBL-CDS" id="AAD42544"/>
    </conflict>
</comment>
<sequence>MINKLEIVNELRRCAEPTQEGWDIWYHGAYLGTIVKIKTGKYMIIRESKDAPVGIRNNFMAAISSFTDAAYEIYLADYKEFQESQPVIRSIGVNKAQQKTLWQRIKGWFK</sequence>
<accession>P22916</accession>
<accession>Q9T0S7</accession>
<protein>
    <recommendedName>
        <fullName>Uncharacterized 12.8 kDa protein in arn-motA intergenic region</fullName>
    </recommendedName>
</protein>